<name>HUTU_PSEP7</name>
<dbReference type="EC" id="4.2.1.49" evidence="1"/>
<dbReference type="EMBL" id="CP000744">
    <property type="protein sequence ID" value="ABR82101.1"/>
    <property type="molecule type" value="Genomic_DNA"/>
</dbReference>
<dbReference type="RefSeq" id="WP_012077758.1">
    <property type="nucleotide sequence ID" value="NC_009656.1"/>
</dbReference>
<dbReference type="SMR" id="A6VDL7"/>
<dbReference type="KEGG" id="pap:PSPA7_5833"/>
<dbReference type="HOGENOM" id="CLU_018868_0_1_6"/>
<dbReference type="UniPathway" id="UPA00379">
    <property type="reaction ID" value="UER00550"/>
</dbReference>
<dbReference type="Proteomes" id="UP000001582">
    <property type="component" value="Chromosome"/>
</dbReference>
<dbReference type="GO" id="GO:0005737">
    <property type="term" value="C:cytoplasm"/>
    <property type="evidence" value="ECO:0007669"/>
    <property type="project" value="UniProtKB-SubCell"/>
</dbReference>
<dbReference type="GO" id="GO:0016153">
    <property type="term" value="F:urocanate hydratase activity"/>
    <property type="evidence" value="ECO:0007669"/>
    <property type="project" value="UniProtKB-UniRule"/>
</dbReference>
<dbReference type="GO" id="GO:0019556">
    <property type="term" value="P:L-histidine catabolic process to glutamate and formamide"/>
    <property type="evidence" value="ECO:0007669"/>
    <property type="project" value="UniProtKB-UniPathway"/>
</dbReference>
<dbReference type="GO" id="GO:0019557">
    <property type="term" value="P:L-histidine catabolic process to glutamate and formate"/>
    <property type="evidence" value="ECO:0007669"/>
    <property type="project" value="UniProtKB-UniPathway"/>
</dbReference>
<dbReference type="FunFam" id="3.40.50.10730:FF:000001">
    <property type="entry name" value="Urocanate hydratase"/>
    <property type="match status" value="1"/>
</dbReference>
<dbReference type="Gene3D" id="3.40.50.10730">
    <property type="entry name" value="Urocanase like domains"/>
    <property type="match status" value="1"/>
</dbReference>
<dbReference type="Gene3D" id="3.40.1770.10">
    <property type="entry name" value="Urocanase superfamily"/>
    <property type="match status" value="1"/>
</dbReference>
<dbReference type="HAMAP" id="MF_00577">
    <property type="entry name" value="HutU"/>
    <property type="match status" value="1"/>
</dbReference>
<dbReference type="InterPro" id="IPR055351">
    <property type="entry name" value="Urocanase"/>
</dbReference>
<dbReference type="InterPro" id="IPR023637">
    <property type="entry name" value="Urocanase-like"/>
</dbReference>
<dbReference type="InterPro" id="IPR035401">
    <property type="entry name" value="Urocanase_C"/>
</dbReference>
<dbReference type="InterPro" id="IPR038364">
    <property type="entry name" value="Urocanase_central_sf"/>
</dbReference>
<dbReference type="InterPro" id="IPR023636">
    <property type="entry name" value="Urocanase_CS"/>
</dbReference>
<dbReference type="InterPro" id="IPR035400">
    <property type="entry name" value="Urocanase_N"/>
</dbReference>
<dbReference type="InterPro" id="IPR035085">
    <property type="entry name" value="Urocanase_Rossmann-like"/>
</dbReference>
<dbReference type="InterPro" id="IPR036190">
    <property type="entry name" value="Urocanase_sf"/>
</dbReference>
<dbReference type="NCBIfam" id="TIGR01228">
    <property type="entry name" value="hutU"/>
    <property type="match status" value="1"/>
</dbReference>
<dbReference type="NCBIfam" id="NF003820">
    <property type="entry name" value="PRK05414.1"/>
    <property type="match status" value="1"/>
</dbReference>
<dbReference type="PANTHER" id="PTHR12216">
    <property type="entry name" value="UROCANATE HYDRATASE"/>
    <property type="match status" value="1"/>
</dbReference>
<dbReference type="PANTHER" id="PTHR12216:SF4">
    <property type="entry name" value="UROCANATE HYDRATASE"/>
    <property type="match status" value="1"/>
</dbReference>
<dbReference type="Pfam" id="PF01175">
    <property type="entry name" value="Urocanase"/>
    <property type="match status" value="1"/>
</dbReference>
<dbReference type="Pfam" id="PF17392">
    <property type="entry name" value="Urocanase_C"/>
    <property type="match status" value="1"/>
</dbReference>
<dbReference type="Pfam" id="PF17391">
    <property type="entry name" value="Urocanase_N"/>
    <property type="match status" value="1"/>
</dbReference>
<dbReference type="PIRSF" id="PIRSF001423">
    <property type="entry name" value="Urocanate_hydrat"/>
    <property type="match status" value="1"/>
</dbReference>
<dbReference type="SUPFAM" id="SSF111326">
    <property type="entry name" value="Urocanase"/>
    <property type="match status" value="1"/>
</dbReference>
<dbReference type="PROSITE" id="PS01233">
    <property type="entry name" value="UROCANASE"/>
    <property type="match status" value="1"/>
</dbReference>
<sequence>MTTPSKFRDIEIRAPRGNTLTAKSWLTEAPLRMLMNNLDPEVAENPKELVVYGGIGRAARNWECYDRIVETLRQLNDDETLLVQSGKPVGVFKTHADAPRVLIANSNLVPHWATWEHFNELDARGLAMYGQMTAGSWIYIGSQGIVQGTYETFVEAGRQHYDGNLAGRWVLTAGLGGMGGAQPLAATLAGACSLNIECQQSRIDFRLRSRYVDEQAKDLDDALARIARYTAEGKAISIALLGNAAEILPELVRRGVRPDMVTDQTSAHDPLNGYLPAGWTWEQYRDRAQTDPAGVVKAAKRSMAVHVQAMLAFQKLGIPTFDYGNNIRQMAKEEGVANAFDFPGFVPAYIRPLFCRGIGPFRWAALSGDPQDIYKTDAKVKELIPDDAHLHRWLDMARERISFQGLPARICWVGLGLRAKLGLAFNEMVRSGELSAPIVIGRDHLDSGSVSSPNRETEAMQDGSDAVSDWPLLNALLNTASGATWVSLHHGGGVGMGFSQHSGMVIVCDGTDAAAARIARVLTNDPGTGVMRHADAGYPIAIDCAREQGLNLPMITGKR</sequence>
<reference key="1">
    <citation type="submission" date="2007-06" db="EMBL/GenBank/DDBJ databases">
        <authorList>
            <person name="Dodson R.J."/>
            <person name="Harkins D."/>
            <person name="Paulsen I.T."/>
        </authorList>
    </citation>
    <scope>NUCLEOTIDE SEQUENCE [LARGE SCALE GENOMIC DNA]</scope>
    <source>
        <strain>DSM 24068 / PA7</strain>
    </source>
</reference>
<proteinExistence type="inferred from homology"/>
<gene>
    <name evidence="1" type="primary">hutU</name>
    <name type="ordered locus">PSPA7_5833</name>
</gene>
<feature type="chain" id="PRO_1000025139" description="Urocanate hydratase">
    <location>
        <begin position="1"/>
        <end position="559"/>
    </location>
</feature>
<feature type="active site" evidence="1">
    <location>
        <position position="411"/>
    </location>
</feature>
<feature type="binding site" evidence="1">
    <location>
        <begin position="53"/>
        <end position="54"/>
    </location>
    <ligand>
        <name>NAD(+)</name>
        <dbReference type="ChEBI" id="CHEBI:57540"/>
    </ligand>
</feature>
<feature type="binding site" evidence="1">
    <location>
        <position position="131"/>
    </location>
    <ligand>
        <name>NAD(+)</name>
        <dbReference type="ChEBI" id="CHEBI:57540"/>
    </ligand>
</feature>
<feature type="binding site" evidence="1">
    <location>
        <begin position="177"/>
        <end position="179"/>
    </location>
    <ligand>
        <name>NAD(+)</name>
        <dbReference type="ChEBI" id="CHEBI:57540"/>
    </ligand>
</feature>
<feature type="binding site" evidence="1">
    <location>
        <position position="197"/>
    </location>
    <ligand>
        <name>NAD(+)</name>
        <dbReference type="ChEBI" id="CHEBI:57540"/>
    </ligand>
</feature>
<feature type="binding site" evidence="1">
    <location>
        <position position="202"/>
    </location>
    <ligand>
        <name>NAD(+)</name>
        <dbReference type="ChEBI" id="CHEBI:57540"/>
    </ligand>
</feature>
<feature type="binding site" evidence="1">
    <location>
        <begin position="243"/>
        <end position="244"/>
    </location>
    <ligand>
        <name>NAD(+)</name>
        <dbReference type="ChEBI" id="CHEBI:57540"/>
    </ligand>
</feature>
<feature type="binding site" evidence="1">
    <location>
        <begin position="264"/>
        <end position="268"/>
    </location>
    <ligand>
        <name>NAD(+)</name>
        <dbReference type="ChEBI" id="CHEBI:57540"/>
    </ligand>
</feature>
<feature type="binding site" evidence="1">
    <location>
        <begin position="274"/>
        <end position="275"/>
    </location>
    <ligand>
        <name>NAD(+)</name>
        <dbReference type="ChEBI" id="CHEBI:57540"/>
    </ligand>
</feature>
<feature type="binding site" evidence="1">
    <location>
        <position position="323"/>
    </location>
    <ligand>
        <name>NAD(+)</name>
        <dbReference type="ChEBI" id="CHEBI:57540"/>
    </ligand>
</feature>
<feature type="binding site" evidence="1">
    <location>
        <position position="493"/>
    </location>
    <ligand>
        <name>NAD(+)</name>
        <dbReference type="ChEBI" id="CHEBI:57540"/>
    </ligand>
</feature>
<keyword id="KW-0963">Cytoplasm</keyword>
<keyword id="KW-0369">Histidine metabolism</keyword>
<keyword id="KW-0456">Lyase</keyword>
<keyword id="KW-0520">NAD</keyword>
<evidence type="ECO:0000255" key="1">
    <source>
        <dbReference type="HAMAP-Rule" id="MF_00577"/>
    </source>
</evidence>
<accession>A6VDL7</accession>
<protein>
    <recommendedName>
        <fullName evidence="1">Urocanate hydratase</fullName>
        <shortName evidence="1">Urocanase</shortName>
        <ecNumber evidence="1">4.2.1.49</ecNumber>
    </recommendedName>
    <alternativeName>
        <fullName evidence="1">Imidazolonepropionate hydrolase</fullName>
    </alternativeName>
</protein>
<comment type="function">
    <text evidence="1">Catalyzes the conversion of urocanate to 4-imidazolone-5-propionate.</text>
</comment>
<comment type="catalytic activity">
    <reaction evidence="1">
        <text>4-imidazolone-5-propanoate = trans-urocanate + H2O</text>
        <dbReference type="Rhea" id="RHEA:13101"/>
        <dbReference type="ChEBI" id="CHEBI:15377"/>
        <dbReference type="ChEBI" id="CHEBI:17771"/>
        <dbReference type="ChEBI" id="CHEBI:77893"/>
        <dbReference type="EC" id="4.2.1.49"/>
    </reaction>
</comment>
<comment type="cofactor">
    <cofactor evidence="1">
        <name>NAD(+)</name>
        <dbReference type="ChEBI" id="CHEBI:57540"/>
    </cofactor>
    <text evidence="1">Binds 1 NAD(+) per subunit.</text>
</comment>
<comment type="pathway">
    <text evidence="1">Amino-acid degradation; L-histidine degradation into L-glutamate; N-formimidoyl-L-glutamate from L-histidine: step 2/3.</text>
</comment>
<comment type="subcellular location">
    <subcellularLocation>
        <location evidence="1">Cytoplasm</location>
    </subcellularLocation>
</comment>
<comment type="similarity">
    <text evidence="1">Belongs to the urocanase family.</text>
</comment>
<organism>
    <name type="scientific">Pseudomonas paraeruginosa (strain DSM 24068 / PA7)</name>
    <name type="common">Pseudomonas aeruginosa (strain PA7)</name>
    <dbReference type="NCBI Taxonomy" id="381754"/>
    <lineage>
        <taxon>Bacteria</taxon>
        <taxon>Pseudomonadati</taxon>
        <taxon>Pseudomonadota</taxon>
        <taxon>Gammaproteobacteria</taxon>
        <taxon>Pseudomonadales</taxon>
        <taxon>Pseudomonadaceae</taxon>
        <taxon>Pseudomonas</taxon>
        <taxon>Pseudomonas paraeruginosa</taxon>
    </lineage>
</organism>